<comment type="function">
    <text evidence="1">Probable mitochondrial intermembrane chaperone that participates in the import and insertion of some multi-pass transmembrane proteins into the mitochondrial inner membrane. Also required for the transfer of beta-barrel precursors from the TOM complex to the sorting and assembly machinery (SAM complex) of the outer membrane. Acts as a chaperone-like protein that protects the hydrophobic precursors from aggregation and guide them through the mitochondrial intermembrane space (By similarity).</text>
</comment>
<comment type="subunit">
    <text evidence="1">Heterohexamer; possibly composed of 3 copies of TIMM8B and 3 copies of TIMM13, named soluble 70 kDa complex. Associates with the TIM22 complex, whose core is composed of TIMM22 (By similarity).</text>
</comment>
<comment type="subcellular location">
    <subcellularLocation>
        <location evidence="1">Mitochondrion inner membrane</location>
        <topology evidence="1">Peripheral membrane protein</topology>
        <orientation evidence="1">Intermembrane side</orientation>
    </subcellularLocation>
</comment>
<comment type="domain">
    <text evidence="1">The twin CX3C motif contains 4 conserved Cys residues that form 2 disulfide bonds in the mitochondrial intermembrane space. However, during the transit of TIMM8B from cytoplasm into mitochondrion, the Cys residues probably coordinate zinc, thereby preventing folding and allowing its transfer across mitochondrial outer membrane (By similarity).</text>
</comment>
<comment type="similarity">
    <text evidence="3">Belongs to the small Tim family.</text>
</comment>
<sequence>MAELGEADEAELQRLVAAEQQKAQFTAQVHHFMELCWDKCVEKPGSRLDSRTENCLSSCVDRFIDTTLAITGRFAQIVQKGGQ</sequence>
<reference key="1">
    <citation type="journal article" date="1999" name="FEBS Lett.">
        <title>The mitochondrial TIM22 preprotein translocase is highly conserved throughout the eukaryotic kingdom.</title>
        <authorList>
            <person name="Bauer M.F."/>
            <person name="Rothbauer U."/>
            <person name="Muehlenbein N."/>
            <person name="Smith R.J.H."/>
            <person name="Gerbitz K.-D."/>
            <person name="Neupert W."/>
            <person name="Brunner M."/>
            <person name="Hofmann S."/>
        </authorList>
    </citation>
    <scope>NUCLEOTIDE SEQUENCE [MRNA]</scope>
</reference>
<gene>
    <name type="primary">Timm8b</name>
    <name type="synonym">Ddp2</name>
    <name type="synonym">Tim8b</name>
</gene>
<accession>P62078</accession>
<accession>Q9QUT4</accession>
<evidence type="ECO:0000250" key="1"/>
<evidence type="ECO:0000250" key="2">
    <source>
        <dbReference type="UniProtKB" id="Q9Y5J9"/>
    </source>
</evidence>
<evidence type="ECO:0000305" key="3"/>
<protein>
    <recommendedName>
        <fullName>Mitochondrial import inner membrane translocase subunit Tim8 B</fullName>
    </recommendedName>
    <alternativeName>
        <fullName>Deafness dystonia protein 2 homolog</fullName>
    </alternativeName>
</protein>
<organism>
    <name type="scientific">Rattus norvegicus</name>
    <name type="common">Rat</name>
    <dbReference type="NCBI Taxonomy" id="10116"/>
    <lineage>
        <taxon>Eukaryota</taxon>
        <taxon>Metazoa</taxon>
        <taxon>Chordata</taxon>
        <taxon>Craniata</taxon>
        <taxon>Vertebrata</taxon>
        <taxon>Euteleostomi</taxon>
        <taxon>Mammalia</taxon>
        <taxon>Eutheria</taxon>
        <taxon>Euarchontoglires</taxon>
        <taxon>Glires</taxon>
        <taxon>Rodentia</taxon>
        <taxon>Myomorpha</taxon>
        <taxon>Muroidea</taxon>
        <taxon>Muridae</taxon>
        <taxon>Murinae</taxon>
        <taxon>Rattus</taxon>
    </lineage>
</organism>
<keyword id="KW-0007">Acetylation</keyword>
<keyword id="KW-0143">Chaperone</keyword>
<keyword id="KW-1015">Disulfide bond</keyword>
<keyword id="KW-0472">Membrane</keyword>
<keyword id="KW-0479">Metal-binding</keyword>
<keyword id="KW-0496">Mitochondrion</keyword>
<keyword id="KW-0999">Mitochondrion inner membrane</keyword>
<keyword id="KW-0653">Protein transport</keyword>
<keyword id="KW-1185">Reference proteome</keyword>
<keyword id="KW-0811">Translocation</keyword>
<keyword id="KW-0813">Transport</keyword>
<keyword id="KW-0862">Zinc</keyword>
<name>TIM8B_RAT</name>
<dbReference type="EMBL" id="AF196315">
    <property type="protein sequence ID" value="AAF13229.1"/>
    <property type="molecule type" value="mRNA"/>
</dbReference>
<dbReference type="RefSeq" id="NP_071986.1">
    <property type="nucleotide sequence ID" value="NM_022541.2"/>
</dbReference>
<dbReference type="SMR" id="P62078"/>
<dbReference type="BioGRID" id="249056">
    <property type="interactions" value="1"/>
</dbReference>
<dbReference type="FunCoup" id="P62078">
    <property type="interactions" value="1979"/>
</dbReference>
<dbReference type="IntAct" id="P62078">
    <property type="interactions" value="2"/>
</dbReference>
<dbReference type="STRING" id="10116.ENSRNOP00000013188"/>
<dbReference type="PhosphoSitePlus" id="P62078"/>
<dbReference type="jPOST" id="P62078"/>
<dbReference type="PaxDb" id="10116-ENSRNOP00000013188"/>
<dbReference type="Ensembl" id="ENSRNOT00000013188.6">
    <property type="protein sequence ID" value="ENSRNOP00000013188.2"/>
    <property type="gene ID" value="ENSRNOG00000009888.6"/>
</dbReference>
<dbReference type="GeneID" id="64372"/>
<dbReference type="KEGG" id="rno:64372"/>
<dbReference type="UCSC" id="RGD:619840">
    <property type="organism name" value="rat"/>
</dbReference>
<dbReference type="AGR" id="RGD:619840"/>
<dbReference type="CTD" id="26521"/>
<dbReference type="RGD" id="619840">
    <property type="gene designation" value="Timm8b"/>
</dbReference>
<dbReference type="eggNOG" id="KOG3489">
    <property type="taxonomic scope" value="Eukaryota"/>
</dbReference>
<dbReference type="GeneTree" id="ENSGT00940000155479"/>
<dbReference type="HOGENOM" id="CLU_141397_1_2_1"/>
<dbReference type="InParanoid" id="P62078"/>
<dbReference type="OMA" id="NEICWDK"/>
<dbReference type="OrthoDB" id="10555at9989"/>
<dbReference type="PhylomeDB" id="P62078"/>
<dbReference type="TreeFam" id="TF106191"/>
<dbReference type="PRO" id="PR:P62078"/>
<dbReference type="Proteomes" id="UP000002494">
    <property type="component" value="Chromosome 8"/>
</dbReference>
<dbReference type="Bgee" id="ENSRNOG00000009888">
    <property type="expression patterns" value="Expressed in cerebellum and 20 other cell types or tissues"/>
</dbReference>
<dbReference type="GO" id="GO:0005743">
    <property type="term" value="C:mitochondrial inner membrane"/>
    <property type="evidence" value="ECO:0007669"/>
    <property type="project" value="UniProtKB-SubCell"/>
</dbReference>
<dbReference type="GO" id="GO:0046872">
    <property type="term" value="F:metal ion binding"/>
    <property type="evidence" value="ECO:0007669"/>
    <property type="project" value="UniProtKB-KW"/>
</dbReference>
<dbReference type="GO" id="GO:0015031">
    <property type="term" value="P:protein transport"/>
    <property type="evidence" value="ECO:0007669"/>
    <property type="project" value="UniProtKB-KW"/>
</dbReference>
<dbReference type="FunFam" id="1.10.287.810:FF:000005">
    <property type="entry name" value="Mitochondrial import inner membrane translocase subunit Tim8 B"/>
    <property type="match status" value="1"/>
</dbReference>
<dbReference type="Gene3D" id="1.10.287.810">
    <property type="entry name" value="Mitochondrial import inner membrane translocase subunit tim13 like domains"/>
    <property type="match status" value="1"/>
</dbReference>
<dbReference type="InterPro" id="IPR004217">
    <property type="entry name" value="Tim10-like"/>
</dbReference>
<dbReference type="InterPro" id="IPR035427">
    <property type="entry name" value="Tim10-like_dom_sf"/>
</dbReference>
<dbReference type="Pfam" id="PF02953">
    <property type="entry name" value="zf-Tim10_DDP"/>
    <property type="match status" value="1"/>
</dbReference>
<dbReference type="SUPFAM" id="SSF144122">
    <property type="entry name" value="Tim10-like"/>
    <property type="match status" value="1"/>
</dbReference>
<feature type="initiator methionine" description="Removed" evidence="2">
    <location>
        <position position="1"/>
    </location>
</feature>
<feature type="chain" id="PRO_0000193589" description="Mitochondrial import inner membrane translocase subunit Tim8 B">
    <location>
        <begin position="2"/>
        <end position="83"/>
    </location>
</feature>
<feature type="short sequence motif" description="Twin CX3C motif">
    <location>
        <begin position="36"/>
        <end position="59"/>
    </location>
</feature>
<feature type="modified residue" description="N-acetylalanine" evidence="2">
    <location>
        <position position="2"/>
    </location>
</feature>
<feature type="disulfide bond" evidence="1">
    <location>
        <begin position="36"/>
        <end position="59"/>
    </location>
</feature>
<feature type="disulfide bond" evidence="1">
    <location>
        <begin position="40"/>
        <end position="55"/>
    </location>
</feature>
<proteinExistence type="inferred from homology"/>